<protein>
    <recommendedName>
        <fullName evidence="9">Ovochymase-2</fullName>
        <ecNumber evidence="7">3.4.21.120</ecNumber>
    </recommendedName>
    <alternativeName>
        <fullName>Oviductal protease</fullName>
    </alternativeName>
    <alternativeName>
        <fullName evidence="8">Oviductin</fullName>
    </alternativeName>
</protein>
<reference key="1">
    <citation type="journal article" date="2002" name="Dev. Biol.">
        <title>Oviductin, the oviductal protease that mediates gamete interaction by affecting the vitelline coat in Bufo japonicus: its molecular cloning and analyses of expression and posttranslational activation.</title>
        <authorList>
            <person name="Hiyoshi M."/>
            <person name="Takamune K."/>
            <person name="Mita K."/>
            <person name="Kubo H."/>
            <person name="Sugimoto Y."/>
            <person name="Katagiri C."/>
        </authorList>
    </citation>
    <scope>NUCLEOTIDE SEQUENCE [MRNA]</scope>
    <scope>PROTEIN SEQUENCE OF 50-62</scope>
    <scope>FUNCTION</scope>
    <scope>TISSUE SPECIFICITY</scope>
    <scope>INDUCTION</scope>
    <scope>PTM</scope>
    <scope>CATALYTIC ACTIVITY</scope>
    <source>
        <tissue>Oviduct</tissue>
    </source>
</reference>
<sequence>MAETSIFPIMMLTVMIGVGRGVTDSPGRVSRCGERPAANTSVSYGLLSRIVGGTSAVKGESPWMVSLKRDGKHFCGGTIISDKYVLTAAHCVLEKNFEFQVSVSIGDHDFAVYERSEQRFAIKSVFKHPNFKPSRPFNYDLAILELVESITFDKDIQPACLPSPDDVFPTGTLCMALGWGRLQENGRLPSSLQKVVLPLIEYRRCLSIMETVDRRLAFETVVCAGFPEGGKDACQGDSGGPFLCQRSQGRWVLVGVTSWGLGCARKWADNILDPVESKGSPGVFTDIQRLLNWLSENLNQDKPDFPTYQVQCSTNDGIEKGTTGEILLPTGYKKYYSNNEKCIWTIIVPRGKHILLTFKSFNVECDYSCDLDYLVIYSALGRLIGKFCGDVSPRPLLIADASITLKFISDFHEYKTGFSLFYEAVEPDTYPDSDCGSVAVIFEEGEIQTMNHPHLYSSHANCQWVVHSPANYIIKITFLVFEVEPSEGCIFDRLVVYHDLQGTVVAGFFCGFALPDPVLSVSNVMQITFTSDYSANYLGFRAVISFVLPSSPVKPEKGNNQPRKNQDAMQHFDEGCGVSPLPPRFLYHNLIKAEEAMPNSWPWHVSINFGNKHVCNGAILSKTFVVTSANCVADREEFPSIGLIVAGLHDLESSINTQKRPVEYVIVHPDYNRLSKDYDVALIHVQRPFQYNSYVQPICLPDGHSRLEPSKLCVVSGWDLNVELSTKLQQLEVPVLMDDVCKKYYDGITDRMFCAGVIAEEDNASCLAQSGAPLVCQSAPGTYAIFGIVSRGVGCNETPKAGVYSSVFLFIPWIMETILSVAGIIDTDSEPHHPLFPPDKPSQQKALLPDSPPSSSSQDIYVTCKDVLSLQSPGEIKLVASGQDGPEGGRCQLIFQAPEGHFILLTFKQLSHEHYSLIIYEGASSNKTFKAQLMEEKIPTIMKSAGAVITLEASSTAQDSALHLWLSYSFHNQN</sequence>
<proteinExistence type="evidence at protein level"/>
<feature type="signal peptide" evidence="3">
    <location>
        <begin position="1"/>
        <end position="21"/>
    </location>
</feature>
<feature type="propeptide" id="PRO_0000261188" description="Activation peptide" evidence="7">
    <location>
        <begin position="22"/>
        <end position="49"/>
    </location>
</feature>
<feature type="chain" id="PRO_0000261189" description="Ovochymase-2">
    <location>
        <begin position="50"/>
        <end position="589"/>
    </location>
</feature>
<feature type="propeptide" id="PRO_0000261190" description="Activation peptide" evidence="1">
    <location>
        <begin position="590"/>
        <end position="974"/>
    </location>
</feature>
<feature type="domain" description="Peptidase S1 1" evidence="5">
    <location>
        <begin position="50"/>
        <end position="299"/>
    </location>
</feature>
<feature type="domain" description="CUB 1" evidence="4">
    <location>
        <begin position="312"/>
        <end position="425"/>
    </location>
</feature>
<feature type="domain" description="CUB 2" evidence="4">
    <location>
        <begin position="435"/>
        <end position="547"/>
    </location>
</feature>
<feature type="domain" description="Peptidase S1 2" evidence="5">
    <location>
        <begin position="590"/>
        <end position="819"/>
    </location>
</feature>
<feature type="region of interest" description="Disordered" evidence="6">
    <location>
        <begin position="830"/>
        <end position="858"/>
    </location>
</feature>
<feature type="active site" description="Charge relay system" evidence="1">
    <location>
        <position position="90"/>
    </location>
</feature>
<feature type="active site" description="Charge relay system" evidence="1">
    <location>
        <position position="140"/>
    </location>
</feature>
<feature type="active site" description="Charge relay system" evidence="1">
    <location>
        <position position="238"/>
    </location>
</feature>
<feature type="binding site" evidence="1">
    <location>
        <position position="112"/>
    </location>
    <ligand>
        <name>Ca(2+)</name>
        <dbReference type="ChEBI" id="CHEBI:29108"/>
    </ligand>
</feature>
<feature type="binding site" evidence="1">
    <location>
        <position position="117"/>
    </location>
    <ligand>
        <name>Ca(2+)</name>
        <dbReference type="ChEBI" id="CHEBI:29108"/>
    </ligand>
</feature>
<feature type="glycosylation site" description="N-linked (GlcNAc...) asparagine" evidence="3">
    <location>
        <position position="39"/>
    </location>
</feature>
<feature type="glycosylation site" description="N-linked (GlcNAc...) asparagine" evidence="3">
    <location>
        <position position="763"/>
    </location>
</feature>
<feature type="glycosylation site" description="N-linked (GlcNAc...) asparagine" evidence="3">
    <location>
        <position position="926"/>
    </location>
</feature>
<feature type="disulfide bond" evidence="1">
    <location>
        <begin position="75"/>
        <end position="91"/>
    </location>
</feature>
<feature type="disulfide bond" evidence="1">
    <location>
        <begin position="174"/>
        <end position="244"/>
    </location>
</feature>
<feature type="disulfide bond" evidence="1">
    <location>
        <begin position="205"/>
        <end position="223"/>
    </location>
</feature>
<feature type="disulfide bond" evidence="1">
    <location>
        <begin position="234"/>
        <end position="263"/>
    </location>
</feature>
<feature type="disulfide bond" evidence="1">
    <location>
        <begin position="312"/>
        <end position="342"/>
    </location>
</feature>
<feature type="disulfide bond" evidence="1">
    <location>
        <begin position="369"/>
        <end position="388"/>
    </location>
</feature>
<feature type="disulfide bond" evidence="1">
    <location>
        <begin position="435"/>
        <end position="462"/>
    </location>
</feature>
<feature type="disulfide bond" evidence="1">
    <location>
        <begin position="489"/>
        <end position="510"/>
    </location>
</feature>
<feature type="disulfide bond" evidence="1">
    <location>
        <begin position="615"/>
        <end position="631"/>
    </location>
</feature>
<feature type="disulfide bond" evidence="1">
    <location>
        <begin position="713"/>
        <end position="776"/>
    </location>
</feature>
<feature type="disulfide bond" evidence="1">
    <location>
        <begin position="741"/>
        <end position="754"/>
    </location>
</feature>
<feature type="disulfide bond" evidence="1">
    <location>
        <begin position="766"/>
        <end position="795"/>
    </location>
</feature>
<gene>
    <name type="primary">OVCH2</name>
    <name type="synonym">OVTN</name>
</gene>
<name>OVCH2_BUFJA</name>
<dbReference type="EC" id="3.4.21.120" evidence="7"/>
<dbReference type="EMBL" id="AB070367">
    <property type="protein sequence ID" value="BAB63372.1"/>
    <property type="molecule type" value="mRNA"/>
</dbReference>
<dbReference type="SMR" id="Q90WD8"/>
<dbReference type="MEROPS" id="S01.240"/>
<dbReference type="GlyCosmos" id="Q90WD8">
    <property type="glycosylation" value="3 sites, No reported glycans"/>
</dbReference>
<dbReference type="KEGG" id="ag:BAB63372"/>
<dbReference type="BRENDA" id="3.4.21.120">
    <property type="organism ID" value="1020"/>
</dbReference>
<dbReference type="GO" id="GO:0005576">
    <property type="term" value="C:extracellular region"/>
    <property type="evidence" value="ECO:0007669"/>
    <property type="project" value="UniProtKB-SubCell"/>
</dbReference>
<dbReference type="GO" id="GO:0046872">
    <property type="term" value="F:metal ion binding"/>
    <property type="evidence" value="ECO:0007669"/>
    <property type="project" value="UniProtKB-KW"/>
</dbReference>
<dbReference type="GO" id="GO:0004252">
    <property type="term" value="F:serine-type endopeptidase activity"/>
    <property type="evidence" value="ECO:0007669"/>
    <property type="project" value="InterPro"/>
</dbReference>
<dbReference type="GO" id="GO:0006508">
    <property type="term" value="P:proteolysis"/>
    <property type="evidence" value="ECO:0007669"/>
    <property type="project" value="UniProtKB-KW"/>
</dbReference>
<dbReference type="CDD" id="cd00041">
    <property type="entry name" value="CUB"/>
    <property type="match status" value="3"/>
</dbReference>
<dbReference type="CDD" id="cd00190">
    <property type="entry name" value="Tryp_SPc"/>
    <property type="match status" value="2"/>
</dbReference>
<dbReference type="FunFam" id="2.60.120.290:FF:000005">
    <property type="entry name" value="Procollagen C-endopeptidase enhancer 1"/>
    <property type="match status" value="2"/>
</dbReference>
<dbReference type="FunFam" id="2.40.10.10:FF:000002">
    <property type="entry name" value="Transmembrane protease serine"/>
    <property type="match status" value="1"/>
</dbReference>
<dbReference type="FunFam" id="2.40.10.10:FF:000003">
    <property type="entry name" value="Transmembrane serine protease 3"/>
    <property type="match status" value="1"/>
</dbReference>
<dbReference type="Gene3D" id="2.60.120.290">
    <property type="entry name" value="Spermadhesin, CUB domain"/>
    <property type="match status" value="3"/>
</dbReference>
<dbReference type="Gene3D" id="2.40.10.10">
    <property type="entry name" value="Trypsin-like serine proteases"/>
    <property type="match status" value="2"/>
</dbReference>
<dbReference type="InterPro" id="IPR000859">
    <property type="entry name" value="CUB_dom"/>
</dbReference>
<dbReference type="InterPro" id="IPR009003">
    <property type="entry name" value="Peptidase_S1_PA"/>
</dbReference>
<dbReference type="InterPro" id="IPR043504">
    <property type="entry name" value="Peptidase_S1_PA_chymotrypsin"/>
</dbReference>
<dbReference type="InterPro" id="IPR001314">
    <property type="entry name" value="Peptidase_S1A"/>
</dbReference>
<dbReference type="InterPro" id="IPR035914">
    <property type="entry name" value="Sperma_CUB_dom_sf"/>
</dbReference>
<dbReference type="InterPro" id="IPR001254">
    <property type="entry name" value="Trypsin_dom"/>
</dbReference>
<dbReference type="InterPro" id="IPR018114">
    <property type="entry name" value="TRYPSIN_HIS"/>
</dbReference>
<dbReference type="InterPro" id="IPR033116">
    <property type="entry name" value="TRYPSIN_SER"/>
</dbReference>
<dbReference type="PANTHER" id="PTHR24252">
    <property type="entry name" value="ACROSIN-RELATED"/>
    <property type="match status" value="1"/>
</dbReference>
<dbReference type="PANTHER" id="PTHR24252:SF10">
    <property type="entry name" value="SERINE PROTEASE 56"/>
    <property type="match status" value="1"/>
</dbReference>
<dbReference type="Pfam" id="PF00431">
    <property type="entry name" value="CUB"/>
    <property type="match status" value="2"/>
</dbReference>
<dbReference type="Pfam" id="PF00089">
    <property type="entry name" value="Trypsin"/>
    <property type="match status" value="2"/>
</dbReference>
<dbReference type="PRINTS" id="PR00722">
    <property type="entry name" value="CHYMOTRYPSIN"/>
</dbReference>
<dbReference type="SMART" id="SM00042">
    <property type="entry name" value="CUB"/>
    <property type="match status" value="2"/>
</dbReference>
<dbReference type="SMART" id="SM00020">
    <property type="entry name" value="Tryp_SPc"/>
    <property type="match status" value="2"/>
</dbReference>
<dbReference type="SUPFAM" id="SSF49854">
    <property type="entry name" value="Spermadhesin, CUB domain"/>
    <property type="match status" value="3"/>
</dbReference>
<dbReference type="SUPFAM" id="SSF50494">
    <property type="entry name" value="Trypsin-like serine proteases"/>
    <property type="match status" value="2"/>
</dbReference>
<dbReference type="PROSITE" id="PS01180">
    <property type="entry name" value="CUB"/>
    <property type="match status" value="2"/>
</dbReference>
<dbReference type="PROSITE" id="PS50240">
    <property type="entry name" value="TRYPSIN_DOM"/>
    <property type="match status" value="2"/>
</dbReference>
<dbReference type="PROSITE" id="PS00134">
    <property type="entry name" value="TRYPSIN_HIS"/>
    <property type="match status" value="1"/>
</dbReference>
<dbReference type="PROSITE" id="PS00135">
    <property type="entry name" value="TRYPSIN_SER"/>
    <property type="match status" value="1"/>
</dbReference>
<evidence type="ECO:0000250" key="1"/>
<evidence type="ECO:0000250" key="2">
    <source>
        <dbReference type="UniProtKB" id="P79953"/>
    </source>
</evidence>
<evidence type="ECO:0000255" key="3"/>
<evidence type="ECO:0000255" key="4">
    <source>
        <dbReference type="PROSITE-ProRule" id="PRU00059"/>
    </source>
</evidence>
<evidence type="ECO:0000255" key="5">
    <source>
        <dbReference type="PROSITE-ProRule" id="PRU00274"/>
    </source>
</evidence>
<evidence type="ECO:0000256" key="6">
    <source>
        <dbReference type="SAM" id="MobiDB-lite"/>
    </source>
</evidence>
<evidence type="ECO:0000269" key="7">
    <source>
    </source>
</evidence>
<evidence type="ECO:0000303" key="8">
    <source>
    </source>
</evidence>
<evidence type="ECO:0000305" key="9"/>
<organism>
    <name type="scientific">Bufo japonicus</name>
    <name type="common">Japanese common toad</name>
    <name type="synonym">Bufo praetextatus</name>
    <dbReference type="NCBI Taxonomy" id="8387"/>
    <lineage>
        <taxon>Eukaryota</taxon>
        <taxon>Metazoa</taxon>
        <taxon>Chordata</taxon>
        <taxon>Craniata</taxon>
        <taxon>Vertebrata</taxon>
        <taxon>Euteleostomi</taxon>
        <taxon>Amphibia</taxon>
        <taxon>Batrachia</taxon>
        <taxon>Anura</taxon>
        <taxon>Neobatrachia</taxon>
        <taxon>Hyloidea</taxon>
        <taxon>Bufonidae</taxon>
        <taxon>Bufo</taxon>
    </lineage>
</organism>
<keyword id="KW-0106">Calcium</keyword>
<keyword id="KW-0903">Direct protein sequencing</keyword>
<keyword id="KW-1015">Disulfide bond</keyword>
<keyword id="KW-0325">Glycoprotein</keyword>
<keyword id="KW-0378">Hydrolase</keyword>
<keyword id="KW-0479">Metal-binding</keyword>
<keyword id="KW-0645">Protease</keyword>
<keyword id="KW-0677">Repeat</keyword>
<keyword id="KW-0964">Secreted</keyword>
<keyword id="KW-0720">Serine protease</keyword>
<keyword id="KW-0732">Signal</keyword>
<keyword id="KW-0865">Zymogen</keyword>
<comment type="function">
    <text evidence="7">Mediates gamete interaction by affecting the vitelline coat.</text>
</comment>
<comment type="catalytic activity">
    <reaction evidence="7">
        <text>Preferential cleavage at 371-Gly-Ser-Arg-|-Trp-374 of glycoprotein gp43 in Xenopus laevis coelemic egg envelope to yield gp41.</text>
        <dbReference type="EC" id="3.4.21.120"/>
    </reaction>
</comment>
<comment type="subcellular location">
    <subcellularLocation>
        <location evidence="2">Secreted</location>
    </subcellularLocation>
</comment>
<comment type="tissue specificity">
    <text evidence="7">Expressed specifically in the cells lining the bottom of epithelial folds in the oviductal pars recta.</text>
</comment>
<comment type="induction">
    <text evidence="7">By human chorionic gonadotropin (HCG).</text>
</comment>
<comment type="PTM">
    <text evidence="7">The catalytically inactive 107 kDa form is processed both N- and C-terminally to give rise to the 66 kDa catalytically active form and inactive forms of 82 kDa and 59 kDa.</text>
</comment>
<comment type="similarity">
    <text evidence="5">Belongs to the peptidase S1 family.</text>
</comment>
<accession>Q90WD8</accession>